<dbReference type="EC" id="4.3.2.10" evidence="1"/>
<dbReference type="EMBL" id="CP000943">
    <property type="protein sequence ID" value="ACA21035.1"/>
    <property type="molecule type" value="Genomic_DNA"/>
</dbReference>
<dbReference type="RefSeq" id="WP_012336409.1">
    <property type="nucleotide sequence ID" value="NC_010511.1"/>
</dbReference>
<dbReference type="SMR" id="B0UHR5"/>
<dbReference type="STRING" id="426117.M446_6790"/>
<dbReference type="KEGG" id="met:M446_6790"/>
<dbReference type="eggNOG" id="COG0107">
    <property type="taxonomic scope" value="Bacteria"/>
</dbReference>
<dbReference type="HOGENOM" id="CLU_048577_4_0_5"/>
<dbReference type="UniPathway" id="UPA00031">
    <property type="reaction ID" value="UER00010"/>
</dbReference>
<dbReference type="GO" id="GO:0005737">
    <property type="term" value="C:cytoplasm"/>
    <property type="evidence" value="ECO:0007669"/>
    <property type="project" value="UniProtKB-SubCell"/>
</dbReference>
<dbReference type="GO" id="GO:0000107">
    <property type="term" value="F:imidazoleglycerol-phosphate synthase activity"/>
    <property type="evidence" value="ECO:0007669"/>
    <property type="project" value="UniProtKB-UniRule"/>
</dbReference>
<dbReference type="GO" id="GO:0016829">
    <property type="term" value="F:lyase activity"/>
    <property type="evidence" value="ECO:0007669"/>
    <property type="project" value="UniProtKB-KW"/>
</dbReference>
<dbReference type="GO" id="GO:0000105">
    <property type="term" value="P:L-histidine biosynthetic process"/>
    <property type="evidence" value="ECO:0007669"/>
    <property type="project" value="UniProtKB-UniRule"/>
</dbReference>
<dbReference type="CDD" id="cd04731">
    <property type="entry name" value="HisF"/>
    <property type="match status" value="1"/>
</dbReference>
<dbReference type="FunFam" id="3.20.20.70:FF:000006">
    <property type="entry name" value="Imidazole glycerol phosphate synthase subunit HisF"/>
    <property type="match status" value="1"/>
</dbReference>
<dbReference type="Gene3D" id="3.20.20.70">
    <property type="entry name" value="Aldolase class I"/>
    <property type="match status" value="1"/>
</dbReference>
<dbReference type="HAMAP" id="MF_01013">
    <property type="entry name" value="HisF"/>
    <property type="match status" value="1"/>
</dbReference>
<dbReference type="InterPro" id="IPR013785">
    <property type="entry name" value="Aldolase_TIM"/>
</dbReference>
<dbReference type="InterPro" id="IPR006062">
    <property type="entry name" value="His_biosynth"/>
</dbReference>
<dbReference type="InterPro" id="IPR004651">
    <property type="entry name" value="HisF"/>
</dbReference>
<dbReference type="InterPro" id="IPR050064">
    <property type="entry name" value="IGPS_HisA/HisF"/>
</dbReference>
<dbReference type="InterPro" id="IPR011060">
    <property type="entry name" value="RibuloseP-bd_barrel"/>
</dbReference>
<dbReference type="NCBIfam" id="TIGR00735">
    <property type="entry name" value="hisF"/>
    <property type="match status" value="1"/>
</dbReference>
<dbReference type="PANTHER" id="PTHR21235:SF2">
    <property type="entry name" value="IMIDAZOLE GLYCEROL PHOSPHATE SYNTHASE HISHF"/>
    <property type="match status" value="1"/>
</dbReference>
<dbReference type="PANTHER" id="PTHR21235">
    <property type="entry name" value="IMIDAZOLE GLYCEROL PHOSPHATE SYNTHASE SUBUNIT HISF/H IGP SYNTHASE SUBUNIT HISF/H"/>
    <property type="match status" value="1"/>
</dbReference>
<dbReference type="Pfam" id="PF00977">
    <property type="entry name" value="His_biosynth"/>
    <property type="match status" value="1"/>
</dbReference>
<dbReference type="SUPFAM" id="SSF51366">
    <property type="entry name" value="Ribulose-phoshate binding barrel"/>
    <property type="match status" value="1"/>
</dbReference>
<proteinExistence type="inferred from homology"/>
<feature type="chain" id="PRO_1000190582" description="Imidazole glycerol phosphate synthase subunit HisF">
    <location>
        <begin position="1"/>
        <end position="258"/>
    </location>
</feature>
<feature type="active site" evidence="1">
    <location>
        <position position="11"/>
    </location>
</feature>
<feature type="active site" evidence="1">
    <location>
        <position position="130"/>
    </location>
</feature>
<comment type="function">
    <text evidence="1">IGPS catalyzes the conversion of PRFAR and glutamine to IGP, AICAR and glutamate. The HisF subunit catalyzes the cyclization activity that produces IGP and AICAR from PRFAR using the ammonia provided by the HisH subunit.</text>
</comment>
<comment type="catalytic activity">
    <reaction evidence="1">
        <text>5-[(5-phospho-1-deoxy-D-ribulos-1-ylimino)methylamino]-1-(5-phospho-beta-D-ribosyl)imidazole-4-carboxamide + L-glutamine = D-erythro-1-(imidazol-4-yl)glycerol 3-phosphate + 5-amino-1-(5-phospho-beta-D-ribosyl)imidazole-4-carboxamide + L-glutamate + H(+)</text>
        <dbReference type="Rhea" id="RHEA:24793"/>
        <dbReference type="ChEBI" id="CHEBI:15378"/>
        <dbReference type="ChEBI" id="CHEBI:29985"/>
        <dbReference type="ChEBI" id="CHEBI:58278"/>
        <dbReference type="ChEBI" id="CHEBI:58359"/>
        <dbReference type="ChEBI" id="CHEBI:58475"/>
        <dbReference type="ChEBI" id="CHEBI:58525"/>
        <dbReference type="EC" id="4.3.2.10"/>
    </reaction>
</comment>
<comment type="pathway">
    <text evidence="1">Amino-acid biosynthesis; L-histidine biosynthesis; L-histidine from 5-phospho-alpha-D-ribose 1-diphosphate: step 5/9.</text>
</comment>
<comment type="subunit">
    <text evidence="1">Heterodimer of HisH and HisF.</text>
</comment>
<comment type="subcellular location">
    <subcellularLocation>
        <location evidence="1">Cytoplasm</location>
    </subcellularLocation>
</comment>
<comment type="similarity">
    <text evidence="1">Belongs to the HisA/HisF family.</text>
</comment>
<evidence type="ECO:0000255" key="1">
    <source>
        <dbReference type="HAMAP-Rule" id="MF_01013"/>
    </source>
</evidence>
<accession>B0UHR5</accession>
<reference key="1">
    <citation type="submission" date="2008-02" db="EMBL/GenBank/DDBJ databases">
        <title>Complete sequence of chromosome of Methylobacterium sp. 4-46.</title>
        <authorList>
            <consortium name="US DOE Joint Genome Institute"/>
            <person name="Copeland A."/>
            <person name="Lucas S."/>
            <person name="Lapidus A."/>
            <person name="Glavina del Rio T."/>
            <person name="Dalin E."/>
            <person name="Tice H."/>
            <person name="Bruce D."/>
            <person name="Goodwin L."/>
            <person name="Pitluck S."/>
            <person name="Chertkov O."/>
            <person name="Brettin T."/>
            <person name="Detter J.C."/>
            <person name="Han C."/>
            <person name="Kuske C.R."/>
            <person name="Schmutz J."/>
            <person name="Larimer F."/>
            <person name="Land M."/>
            <person name="Hauser L."/>
            <person name="Kyrpides N."/>
            <person name="Ivanova N."/>
            <person name="Marx C.J."/>
            <person name="Richardson P."/>
        </authorList>
    </citation>
    <scope>NUCLEOTIDE SEQUENCE [LARGE SCALE GENOMIC DNA]</scope>
    <source>
        <strain>4-46</strain>
    </source>
</reference>
<sequence>MLKTRVIPCLDVKDGRVVKGVQFLALRDAGDPVEAAKAYDAAGADELCFLDITASHEARGILLDVVQRTAEACFMPLTVGGGVRSVEDIRALLLAGADKVSINTAAVNNPDFVAEAAEKFGNQCIVVAIDAKRVSGPGEAPRWEIFTHGGRRATGLDAITFARTVTARGAGELLVTSMDRDGMRSGYDLGLTRAIADAVSVPVIASGGVGGLDDLVAGVAEGHASAVLAASIFHFGEATVAQAKAHMAAAGLAMRLDP</sequence>
<gene>
    <name evidence="1" type="primary">hisF</name>
    <name type="ordered locus">M446_6790</name>
</gene>
<keyword id="KW-0028">Amino-acid biosynthesis</keyword>
<keyword id="KW-0963">Cytoplasm</keyword>
<keyword id="KW-0368">Histidine biosynthesis</keyword>
<keyword id="KW-0456">Lyase</keyword>
<name>HIS6_METS4</name>
<protein>
    <recommendedName>
        <fullName evidence="1">Imidazole glycerol phosphate synthase subunit HisF</fullName>
        <ecNumber evidence="1">4.3.2.10</ecNumber>
    </recommendedName>
    <alternativeName>
        <fullName evidence="1">IGP synthase cyclase subunit</fullName>
    </alternativeName>
    <alternativeName>
        <fullName evidence="1">IGP synthase subunit HisF</fullName>
    </alternativeName>
    <alternativeName>
        <fullName evidence="1">ImGP synthase subunit HisF</fullName>
        <shortName evidence="1">IGPS subunit HisF</shortName>
    </alternativeName>
</protein>
<organism>
    <name type="scientific">Methylobacterium sp. (strain 4-46)</name>
    <dbReference type="NCBI Taxonomy" id="426117"/>
    <lineage>
        <taxon>Bacteria</taxon>
        <taxon>Pseudomonadati</taxon>
        <taxon>Pseudomonadota</taxon>
        <taxon>Alphaproteobacteria</taxon>
        <taxon>Hyphomicrobiales</taxon>
        <taxon>Methylobacteriaceae</taxon>
        <taxon>Methylobacterium</taxon>
    </lineage>
</organism>